<protein>
    <recommendedName>
        <fullName>Glucose/galactose transporter</fullName>
    </recommendedName>
</protein>
<keyword id="KW-0997">Cell inner membrane</keyword>
<keyword id="KW-1003">Cell membrane</keyword>
<keyword id="KW-0472">Membrane</keyword>
<keyword id="KW-0762">Sugar transport</keyword>
<keyword id="KW-0812">Transmembrane</keyword>
<keyword id="KW-1133">Transmembrane helix</keyword>
<keyword id="KW-0813">Transport</keyword>
<feature type="chain" id="PRO_0000094503" description="Glucose/galactose transporter">
    <location>
        <begin position="1"/>
        <end position="412"/>
    </location>
</feature>
<feature type="transmembrane region" description="Helical" evidence="1">
    <location>
        <begin position="21"/>
        <end position="41"/>
    </location>
</feature>
<feature type="transmembrane region" description="Helical" evidence="1">
    <location>
        <begin position="62"/>
        <end position="82"/>
    </location>
</feature>
<feature type="transmembrane region" description="Helical" evidence="1">
    <location>
        <begin position="90"/>
        <end position="110"/>
    </location>
</feature>
<feature type="transmembrane region" description="Helical" evidence="1">
    <location>
        <begin position="113"/>
        <end position="133"/>
    </location>
</feature>
<feature type="transmembrane region" description="Helical" evidence="1">
    <location>
        <begin position="158"/>
        <end position="178"/>
    </location>
</feature>
<feature type="transmembrane region" description="Helical" evidence="1">
    <location>
        <begin position="192"/>
        <end position="212"/>
    </location>
</feature>
<feature type="transmembrane region" description="Helical" evidence="1">
    <location>
        <begin position="239"/>
        <end position="259"/>
    </location>
</feature>
<feature type="transmembrane region" description="Helical" evidence="1">
    <location>
        <begin position="310"/>
        <end position="330"/>
    </location>
</feature>
<feature type="transmembrane region" description="Helical" evidence="1">
    <location>
        <begin position="331"/>
        <end position="351"/>
    </location>
</feature>
<feature type="transmembrane region" description="Helical" evidence="1">
    <location>
        <begin position="363"/>
        <end position="383"/>
    </location>
</feature>
<feature type="transmembrane region" description="Helical" evidence="1">
    <location>
        <begin position="388"/>
        <end position="408"/>
    </location>
</feature>
<organism>
    <name type="scientific">Brucella abortus biovar 1 (strain 9-941)</name>
    <dbReference type="NCBI Taxonomy" id="262698"/>
    <lineage>
        <taxon>Bacteria</taxon>
        <taxon>Pseudomonadati</taxon>
        <taxon>Pseudomonadota</taxon>
        <taxon>Alphaproteobacteria</taxon>
        <taxon>Hyphomicrobiales</taxon>
        <taxon>Brucellaceae</taxon>
        <taxon>Brucella/Ochrobactrum group</taxon>
        <taxon>Brucella</taxon>
    </lineage>
</organism>
<comment type="function">
    <text evidence="2">Intake of glucose and galactose.</text>
</comment>
<comment type="subcellular location">
    <subcellularLocation>
        <location evidence="2">Cell inner membrane</location>
        <topology evidence="2">Multi-pass membrane protein</topology>
    </subcellularLocation>
</comment>
<comment type="similarity">
    <text evidence="2">Belongs to the major facilitator superfamily. FHS transporter (TC 2.A.1.7) family.</text>
</comment>
<accession>P0C105</accession>
<accession>Q44623</accession>
<accession>Q579Q5</accession>
<reference key="1">
    <citation type="journal article" date="2005" name="J. Bacteriol.">
        <title>Completion of the genome sequence of Brucella abortus and comparison to the highly similar genomes of Brucella melitensis and Brucella suis.</title>
        <authorList>
            <person name="Halling S.M."/>
            <person name="Peterson-Burch B.D."/>
            <person name="Bricker B.J."/>
            <person name="Zuerner R.L."/>
            <person name="Qing Z."/>
            <person name="Li L.-L."/>
            <person name="Kapur V."/>
            <person name="Alt D.P."/>
            <person name="Olsen S.C."/>
        </authorList>
    </citation>
    <scope>NUCLEOTIDE SEQUENCE [LARGE SCALE GENOMIC DNA]</scope>
    <source>
        <strain>9-941</strain>
    </source>
</reference>
<sequence length="412" mass="43801">MATSIPTNNPLHTETSSQKNYGFALTSLTLLFFMWGFITCLNDILIPHLKNVFQLNYTQSMLIQFCFFGAYFIVSLPAGQLVKRISYKRGIVVGLIVAAIGCALFIPAASYRVYALFLGALFVLASGVTILQVAANPYVTILGKPETAASRLTLTQAFNSLGTTVAPVFGAVLILSAATDATVNAEADAVRFPYLLLALAFTVLAIIFAILKPPDVQEDEPALSDKKEGSAWQYRHLVLGAIGIFVYVGAEVSVGSFLVNFLSDPTVAGLSETDAAHHVAYFWGGAMVGRFIGSAAMRYIDDGKALAFNAFVAIILLFITVATTGHIAMWSVLAIGLFNSIMFPTIFSLALHGLGSHTSQGSGILCLAIVGGAIVPLIQGALADAIGIHLAFLMPIICYAYIAFYGLIGSKS</sequence>
<evidence type="ECO:0000255" key="1"/>
<evidence type="ECO:0000305" key="2"/>
<dbReference type="EMBL" id="AE017224">
    <property type="protein sequence ID" value="AAX75629.1"/>
    <property type="molecule type" value="Genomic_DNA"/>
</dbReference>
<dbReference type="RefSeq" id="WP_002966392.1">
    <property type="nucleotide sequence ID" value="NC_006933.1"/>
</dbReference>
<dbReference type="SMR" id="P0C105"/>
<dbReference type="TCDB" id="2.A.1.7.2">
    <property type="family name" value="the major facilitator superfamily (mfs)"/>
</dbReference>
<dbReference type="EnsemblBacteria" id="AAX75629">
    <property type="protein sequence ID" value="AAX75629"/>
    <property type="gene ID" value="BruAb2_0185"/>
</dbReference>
<dbReference type="KEGG" id="bmb:BruAb2_0185"/>
<dbReference type="HOGENOM" id="CLU_028452_2_2_5"/>
<dbReference type="Proteomes" id="UP000000540">
    <property type="component" value="Chromosome II"/>
</dbReference>
<dbReference type="GO" id="GO:0005886">
    <property type="term" value="C:plasma membrane"/>
    <property type="evidence" value="ECO:0007669"/>
    <property type="project" value="UniProtKB-SubCell"/>
</dbReference>
<dbReference type="GO" id="GO:0055056">
    <property type="term" value="F:D-glucose transmembrane transporter activity"/>
    <property type="evidence" value="ECO:0007669"/>
    <property type="project" value="InterPro"/>
</dbReference>
<dbReference type="GO" id="GO:0005354">
    <property type="term" value="F:galactose transmembrane transporter activity"/>
    <property type="evidence" value="ECO:0007669"/>
    <property type="project" value="InterPro"/>
</dbReference>
<dbReference type="GO" id="GO:1904659">
    <property type="term" value="P:D-glucose transmembrane transport"/>
    <property type="evidence" value="ECO:0007669"/>
    <property type="project" value="InterPro"/>
</dbReference>
<dbReference type="CDD" id="cd17394">
    <property type="entry name" value="MFS_FucP_like"/>
    <property type="match status" value="1"/>
</dbReference>
<dbReference type="Gene3D" id="1.20.1250.20">
    <property type="entry name" value="MFS general substrate transporter like domains"/>
    <property type="match status" value="2"/>
</dbReference>
<dbReference type="InterPro" id="IPR005964">
    <property type="entry name" value="Glc/Gal_transptr_bac"/>
</dbReference>
<dbReference type="InterPro" id="IPR011701">
    <property type="entry name" value="MFS"/>
</dbReference>
<dbReference type="InterPro" id="IPR036259">
    <property type="entry name" value="MFS_trans_sf"/>
</dbReference>
<dbReference type="InterPro" id="IPR050375">
    <property type="entry name" value="MFS_TsgA-like"/>
</dbReference>
<dbReference type="NCBIfam" id="TIGR01272">
    <property type="entry name" value="gluP"/>
    <property type="match status" value="1"/>
</dbReference>
<dbReference type="PANTHER" id="PTHR43702">
    <property type="entry name" value="L-FUCOSE-PROTON SYMPORTER"/>
    <property type="match status" value="1"/>
</dbReference>
<dbReference type="PANTHER" id="PTHR43702:SF3">
    <property type="entry name" value="PROTEIN TSGA"/>
    <property type="match status" value="1"/>
</dbReference>
<dbReference type="Pfam" id="PF07690">
    <property type="entry name" value="MFS_1"/>
    <property type="match status" value="1"/>
</dbReference>
<dbReference type="SUPFAM" id="SSF103473">
    <property type="entry name" value="MFS general substrate transporter"/>
    <property type="match status" value="1"/>
</dbReference>
<name>GLUP_BRUAB</name>
<proteinExistence type="inferred from homology"/>
<gene>
    <name type="primary">gluP</name>
    <name type="ordered locus">BruAb2_0185</name>
</gene>